<keyword id="KW-1185">Reference proteome</keyword>
<keyword id="KW-0687">Ribonucleoprotein</keyword>
<keyword id="KW-0689">Ribosomal protein</keyword>
<keyword id="KW-0694">RNA-binding</keyword>
<keyword id="KW-0699">rRNA-binding</keyword>
<keyword id="KW-0820">tRNA-binding</keyword>
<comment type="function">
    <text evidence="1">One of the primary rRNA binding proteins, it binds directly to 16S rRNA where it nucleates assembly of the head domain of the 30S subunit. Is located at the subunit interface close to the decoding center, probably blocks exit of the E-site tRNA.</text>
</comment>
<comment type="subunit">
    <text evidence="1">Part of the 30S ribosomal subunit. Contacts proteins S9 and S11.</text>
</comment>
<comment type="similarity">
    <text evidence="1">Belongs to the universal ribosomal protein uS7 family.</text>
</comment>
<proteinExistence type="inferred from homology"/>
<evidence type="ECO:0000255" key="1">
    <source>
        <dbReference type="HAMAP-Rule" id="MF_00480"/>
    </source>
</evidence>
<evidence type="ECO:0000305" key="2"/>
<dbReference type="EMBL" id="CP001390">
    <property type="protein sequence ID" value="ACM21970.1"/>
    <property type="molecule type" value="Genomic_DNA"/>
</dbReference>
<dbReference type="RefSeq" id="WP_012648697.1">
    <property type="nucleotide sequence ID" value="NC_011979.1"/>
</dbReference>
<dbReference type="SMR" id="B9M6U9"/>
<dbReference type="STRING" id="316067.Geob_3629"/>
<dbReference type="KEGG" id="geo:Geob_3629"/>
<dbReference type="eggNOG" id="COG0049">
    <property type="taxonomic scope" value="Bacteria"/>
</dbReference>
<dbReference type="HOGENOM" id="CLU_072226_1_1_7"/>
<dbReference type="OrthoDB" id="9807653at2"/>
<dbReference type="Proteomes" id="UP000007721">
    <property type="component" value="Chromosome"/>
</dbReference>
<dbReference type="GO" id="GO:0015935">
    <property type="term" value="C:small ribosomal subunit"/>
    <property type="evidence" value="ECO:0007669"/>
    <property type="project" value="InterPro"/>
</dbReference>
<dbReference type="GO" id="GO:0019843">
    <property type="term" value="F:rRNA binding"/>
    <property type="evidence" value="ECO:0007669"/>
    <property type="project" value="UniProtKB-UniRule"/>
</dbReference>
<dbReference type="GO" id="GO:0003735">
    <property type="term" value="F:structural constituent of ribosome"/>
    <property type="evidence" value="ECO:0007669"/>
    <property type="project" value="InterPro"/>
</dbReference>
<dbReference type="GO" id="GO:0000049">
    <property type="term" value="F:tRNA binding"/>
    <property type="evidence" value="ECO:0007669"/>
    <property type="project" value="UniProtKB-UniRule"/>
</dbReference>
<dbReference type="GO" id="GO:0006412">
    <property type="term" value="P:translation"/>
    <property type="evidence" value="ECO:0007669"/>
    <property type="project" value="UniProtKB-UniRule"/>
</dbReference>
<dbReference type="CDD" id="cd14869">
    <property type="entry name" value="uS7_Bacteria"/>
    <property type="match status" value="1"/>
</dbReference>
<dbReference type="FunFam" id="1.10.455.10:FF:000001">
    <property type="entry name" value="30S ribosomal protein S7"/>
    <property type="match status" value="1"/>
</dbReference>
<dbReference type="Gene3D" id="1.10.455.10">
    <property type="entry name" value="Ribosomal protein S7 domain"/>
    <property type="match status" value="1"/>
</dbReference>
<dbReference type="HAMAP" id="MF_00480_B">
    <property type="entry name" value="Ribosomal_uS7_B"/>
    <property type="match status" value="1"/>
</dbReference>
<dbReference type="InterPro" id="IPR000235">
    <property type="entry name" value="Ribosomal_uS7"/>
</dbReference>
<dbReference type="InterPro" id="IPR005717">
    <property type="entry name" value="Ribosomal_uS7_bac/org-type"/>
</dbReference>
<dbReference type="InterPro" id="IPR023798">
    <property type="entry name" value="Ribosomal_uS7_dom"/>
</dbReference>
<dbReference type="InterPro" id="IPR036823">
    <property type="entry name" value="Ribosomal_uS7_dom_sf"/>
</dbReference>
<dbReference type="NCBIfam" id="TIGR01029">
    <property type="entry name" value="rpsG_bact"/>
    <property type="match status" value="1"/>
</dbReference>
<dbReference type="PANTHER" id="PTHR11205">
    <property type="entry name" value="RIBOSOMAL PROTEIN S7"/>
    <property type="match status" value="1"/>
</dbReference>
<dbReference type="Pfam" id="PF00177">
    <property type="entry name" value="Ribosomal_S7"/>
    <property type="match status" value="1"/>
</dbReference>
<dbReference type="PIRSF" id="PIRSF002122">
    <property type="entry name" value="RPS7p_RPS7a_RPS5e_RPS7o"/>
    <property type="match status" value="1"/>
</dbReference>
<dbReference type="SUPFAM" id="SSF47973">
    <property type="entry name" value="Ribosomal protein S7"/>
    <property type="match status" value="1"/>
</dbReference>
<sequence length="156" mass="17925">MPRRREVAKRIILPDPKYGDRVVAKLVNIIMFDGKKSTAERALYGALEIVSEKVNEEPVKILKKSLDNIKPMLEVKSRRVGGSTYQVPVEVRAERRVSLAMRWLVKYANDRSEKTVTDKLAGEILDAYNNRGAAVKKREDTHKMAEANRAFAHYRW</sequence>
<organism>
    <name type="scientific">Geotalea daltonii (strain DSM 22248 / JCM 15807 / FRC-32)</name>
    <name type="common">Geobacter daltonii</name>
    <dbReference type="NCBI Taxonomy" id="316067"/>
    <lineage>
        <taxon>Bacteria</taxon>
        <taxon>Pseudomonadati</taxon>
        <taxon>Thermodesulfobacteriota</taxon>
        <taxon>Desulfuromonadia</taxon>
        <taxon>Geobacterales</taxon>
        <taxon>Geobacteraceae</taxon>
        <taxon>Geotalea</taxon>
    </lineage>
</organism>
<gene>
    <name evidence="1" type="primary">rpsG</name>
    <name type="ordered locus">Geob_3629</name>
</gene>
<feature type="chain" id="PRO_1000135605" description="Small ribosomal subunit protein uS7">
    <location>
        <begin position="1"/>
        <end position="156"/>
    </location>
</feature>
<reference key="1">
    <citation type="submission" date="2009-01" db="EMBL/GenBank/DDBJ databases">
        <title>Complete sequence of Geobacter sp. FRC-32.</title>
        <authorList>
            <consortium name="US DOE Joint Genome Institute"/>
            <person name="Lucas S."/>
            <person name="Copeland A."/>
            <person name="Lapidus A."/>
            <person name="Glavina del Rio T."/>
            <person name="Dalin E."/>
            <person name="Tice H."/>
            <person name="Bruce D."/>
            <person name="Goodwin L."/>
            <person name="Pitluck S."/>
            <person name="Saunders E."/>
            <person name="Brettin T."/>
            <person name="Detter J.C."/>
            <person name="Han C."/>
            <person name="Larimer F."/>
            <person name="Land M."/>
            <person name="Hauser L."/>
            <person name="Kyrpides N."/>
            <person name="Ovchinnikova G."/>
            <person name="Kostka J."/>
            <person name="Richardson P."/>
        </authorList>
    </citation>
    <scope>NUCLEOTIDE SEQUENCE [LARGE SCALE GENOMIC DNA]</scope>
    <source>
        <strain>DSM 22248 / JCM 15807 / FRC-32</strain>
    </source>
</reference>
<accession>B9M6U9</accession>
<protein>
    <recommendedName>
        <fullName evidence="1">Small ribosomal subunit protein uS7</fullName>
    </recommendedName>
    <alternativeName>
        <fullName evidence="2">30S ribosomal protein S7</fullName>
    </alternativeName>
</protein>
<name>RS7_GEODF</name>